<proteinExistence type="inferred from homology"/>
<feature type="signal peptide" evidence="3">
    <location>
        <begin position="1"/>
        <end position="21"/>
    </location>
</feature>
<feature type="propeptide" id="PRO_0000433689" evidence="1">
    <location>
        <begin position="22"/>
        <end position="32"/>
    </location>
</feature>
<feature type="chain" id="PRO_5000319679" description="U-actitoxin-Avd1g">
    <location>
        <begin position="35"/>
        <end position="83"/>
    </location>
</feature>
<feature type="disulfide bond" evidence="2">
    <location>
        <begin position="40"/>
        <end position="79"/>
    </location>
</feature>
<feature type="disulfide bond" evidence="2">
    <location>
        <begin position="42"/>
        <end position="70"/>
    </location>
</feature>
<feature type="disulfide bond" evidence="2">
    <location>
        <begin position="63"/>
        <end position="80"/>
    </location>
</feature>
<name>NA19_ANEVI</name>
<protein>
    <recommendedName>
        <fullName evidence="5">U-actitoxin-Avd1g</fullName>
        <shortName evidence="5">U-AITX-Avd1g</shortName>
    </recommendedName>
    <alternativeName>
        <fullName evidence="4">Av9</fullName>
    </alternativeName>
    <alternativeName>
        <fullName evidence="7">Neurotoxin 9</fullName>
    </alternativeName>
</protein>
<comment type="function">
    <text evidence="2">Binds specifically to voltage-gated sodium channels (Nav), thereby delaying their inactivation during signal transduction. Thus it strongly stimulates mammalian cardiac muscle contraction.</text>
</comment>
<comment type="subcellular location">
    <subcellularLocation>
        <location evidence="1">Secreted</location>
    </subcellularLocation>
    <subcellularLocation>
        <location evidence="1">Nematocyst</location>
    </subcellularLocation>
</comment>
<comment type="similarity">
    <text evidence="6">Belongs to the sea anemone sodium channel inhibitory toxin family. Type I subfamily.</text>
</comment>
<comment type="caution">
    <text evidence="6">Opinions are divided on whether Anemonia viridis (Forsskal, 1775) and Anemonia sulcata (Pennant, 1777) are separate species.</text>
</comment>
<reference key="1">
    <citation type="journal article" date="2008" name="Mol. Biol. Evol.">
        <title>Concerted evolution of sea anemone neurotoxin genes is revealed through analysis of the Nematostella vectensis genome.</title>
        <authorList>
            <person name="Moran Y."/>
            <person name="Weinberger H."/>
            <person name="Sullivan J.C."/>
            <person name="Reitzel A.M."/>
            <person name="Finnerty J.R."/>
            <person name="Gurevitz M."/>
        </authorList>
    </citation>
    <scope>NUCLEOTIDE SEQUENCE [MRNA]</scope>
</reference>
<reference key="2">
    <citation type="journal article" date="2012" name="Toxicon">
        <title>Development of a rational nomenclature for naming peptide and protein toxins from sea anemones.</title>
        <authorList>
            <person name="Oliveira J.S."/>
            <person name="Fuentes-Silva D."/>
            <person name="King G.F."/>
        </authorList>
    </citation>
    <scope>NOMENCLATURE</scope>
</reference>
<keyword id="KW-0165">Cleavage on pair of basic residues</keyword>
<keyword id="KW-1015">Disulfide bond</keyword>
<keyword id="KW-0872">Ion channel impairing toxin</keyword>
<keyword id="KW-0166">Nematocyst</keyword>
<keyword id="KW-0528">Neurotoxin</keyword>
<keyword id="KW-0964">Secreted</keyword>
<keyword id="KW-0732">Signal</keyword>
<keyword id="KW-0800">Toxin</keyword>
<keyword id="KW-0738">Voltage-gated sodium channel impairing toxin</keyword>
<dbReference type="EMBL" id="EU124472">
    <property type="protein sequence ID" value="ABW97351.1"/>
    <property type="molecule type" value="mRNA"/>
</dbReference>
<dbReference type="SMR" id="B1NWT5"/>
<dbReference type="GO" id="GO:0005576">
    <property type="term" value="C:extracellular region"/>
    <property type="evidence" value="ECO:0007669"/>
    <property type="project" value="UniProtKB-SubCell"/>
</dbReference>
<dbReference type="GO" id="GO:0042151">
    <property type="term" value="C:nematocyst"/>
    <property type="evidence" value="ECO:0007669"/>
    <property type="project" value="UniProtKB-SubCell"/>
</dbReference>
<dbReference type="GO" id="GO:0017080">
    <property type="term" value="F:sodium channel regulator activity"/>
    <property type="evidence" value="ECO:0007669"/>
    <property type="project" value="UniProtKB-KW"/>
</dbReference>
<dbReference type="GO" id="GO:0090729">
    <property type="term" value="F:toxin activity"/>
    <property type="evidence" value="ECO:0007669"/>
    <property type="project" value="UniProtKB-KW"/>
</dbReference>
<dbReference type="Gene3D" id="2.20.20.10">
    <property type="entry name" value="Anthopleurin-A"/>
    <property type="match status" value="1"/>
</dbReference>
<dbReference type="InterPro" id="IPR023355">
    <property type="entry name" value="Myo_ane_neurotoxin_sf"/>
</dbReference>
<dbReference type="Pfam" id="PF00706">
    <property type="entry name" value="Toxin_4"/>
    <property type="match status" value="1"/>
</dbReference>
<dbReference type="SUPFAM" id="SSF57392">
    <property type="entry name" value="Defensin-like"/>
    <property type="match status" value="1"/>
</dbReference>
<accession>B1NWT5</accession>
<organism>
    <name type="scientific">Anemonia viridis</name>
    <name type="common">Snakelocks anemone</name>
    <dbReference type="NCBI Taxonomy" id="51769"/>
    <lineage>
        <taxon>Eukaryota</taxon>
        <taxon>Metazoa</taxon>
        <taxon>Cnidaria</taxon>
        <taxon>Anthozoa</taxon>
        <taxon>Hexacorallia</taxon>
        <taxon>Actiniaria</taxon>
        <taxon>Actiniidae</taxon>
        <taxon>Anemonia</taxon>
    </lineage>
</organism>
<sequence>MMNRLLVFLMLGAAFMLVVSAIDQDANDVNMVKRFVSASCLCASDGPTTRGNSLSGTIWLFGCPSGWGDCKGRAIAGTCCKRE</sequence>
<evidence type="ECO:0000250" key="1"/>
<evidence type="ECO:0000250" key="2">
    <source>
        <dbReference type="UniProtKB" id="P01533"/>
    </source>
</evidence>
<evidence type="ECO:0000255" key="3"/>
<evidence type="ECO:0000303" key="4">
    <source>
    </source>
</evidence>
<evidence type="ECO:0000303" key="5">
    <source>
    </source>
</evidence>
<evidence type="ECO:0000305" key="6"/>
<evidence type="ECO:0000312" key="7">
    <source>
        <dbReference type="EMBL" id="ABW97351.1"/>
    </source>
</evidence>